<protein>
    <recommendedName>
        <fullName evidence="1">Crossover junction endodeoxyribonuclease RuvC</fullName>
        <ecNumber evidence="1">3.1.21.10</ecNumber>
    </recommendedName>
    <alternativeName>
        <fullName evidence="1">Holliday junction nuclease RuvC</fullName>
    </alternativeName>
    <alternativeName>
        <fullName evidence="1">Holliday junction resolvase RuvC</fullName>
    </alternativeName>
</protein>
<feature type="chain" id="PRO_1000090561" description="Crossover junction endodeoxyribonuclease RuvC">
    <location>
        <begin position="1"/>
        <end position="173"/>
    </location>
</feature>
<feature type="active site" evidence="1">
    <location>
        <position position="8"/>
    </location>
</feature>
<feature type="active site" evidence="1">
    <location>
        <position position="67"/>
    </location>
</feature>
<feature type="active site" evidence="1">
    <location>
        <position position="139"/>
    </location>
</feature>
<feature type="binding site" evidence="1">
    <location>
        <position position="8"/>
    </location>
    <ligand>
        <name>Mg(2+)</name>
        <dbReference type="ChEBI" id="CHEBI:18420"/>
        <label>1</label>
    </ligand>
</feature>
<feature type="binding site" evidence="1">
    <location>
        <position position="67"/>
    </location>
    <ligand>
        <name>Mg(2+)</name>
        <dbReference type="ChEBI" id="CHEBI:18420"/>
        <label>2</label>
    </ligand>
</feature>
<feature type="binding site" evidence="1">
    <location>
        <position position="139"/>
    </location>
    <ligand>
        <name>Mg(2+)</name>
        <dbReference type="ChEBI" id="CHEBI:18420"/>
        <label>1</label>
    </ligand>
</feature>
<evidence type="ECO:0000255" key="1">
    <source>
        <dbReference type="HAMAP-Rule" id="MF_00034"/>
    </source>
</evidence>
<gene>
    <name evidence="1" type="primary">ruvC</name>
    <name type="ordered locus">SSPA0905</name>
</gene>
<name>RUVC_SALPK</name>
<comment type="function">
    <text evidence="1">The RuvA-RuvB-RuvC complex processes Holliday junction (HJ) DNA during genetic recombination and DNA repair. Endonuclease that resolves HJ intermediates. Cleaves cruciform DNA by making single-stranded nicks across the HJ at symmetrical positions within the homologous arms, yielding a 5'-phosphate and a 3'-hydroxyl group; requires a central core of homology in the junction. The consensus cleavage sequence is 5'-(A/T)TT(C/G)-3'. Cleavage occurs on the 3'-side of the TT dinucleotide at the point of strand exchange. HJ branch migration catalyzed by RuvA-RuvB allows RuvC to scan DNA until it finds its consensus sequence, where it cleaves and resolves the cruciform DNA.</text>
</comment>
<comment type="catalytic activity">
    <reaction evidence="1">
        <text>Endonucleolytic cleavage at a junction such as a reciprocal single-stranded crossover between two homologous DNA duplexes (Holliday junction).</text>
        <dbReference type="EC" id="3.1.21.10"/>
    </reaction>
</comment>
<comment type="cofactor">
    <cofactor evidence="1">
        <name>Mg(2+)</name>
        <dbReference type="ChEBI" id="CHEBI:18420"/>
    </cofactor>
    <text evidence="1">Binds 2 Mg(2+) ion per subunit.</text>
</comment>
<comment type="subunit">
    <text evidence="1">Homodimer which binds Holliday junction (HJ) DNA. The HJ becomes 2-fold symmetrical on binding to RuvC with unstacked arms; it has a different conformation from HJ DNA in complex with RuvA. In the full resolvosome a probable DNA-RuvA(4)-RuvB(12)-RuvC(2) complex forms which resolves the HJ.</text>
</comment>
<comment type="subcellular location">
    <subcellularLocation>
        <location evidence="1">Cytoplasm</location>
    </subcellularLocation>
</comment>
<comment type="similarity">
    <text evidence="1">Belongs to the RuvC family.</text>
</comment>
<organism>
    <name type="scientific">Salmonella paratyphi A (strain AKU_12601)</name>
    <dbReference type="NCBI Taxonomy" id="554290"/>
    <lineage>
        <taxon>Bacteria</taxon>
        <taxon>Pseudomonadati</taxon>
        <taxon>Pseudomonadota</taxon>
        <taxon>Gammaproteobacteria</taxon>
        <taxon>Enterobacterales</taxon>
        <taxon>Enterobacteriaceae</taxon>
        <taxon>Salmonella</taxon>
    </lineage>
</organism>
<accession>B5BH57</accession>
<dbReference type="EC" id="3.1.21.10" evidence="1"/>
<dbReference type="EMBL" id="FM200053">
    <property type="protein sequence ID" value="CAR59049.1"/>
    <property type="molecule type" value="Genomic_DNA"/>
</dbReference>
<dbReference type="RefSeq" id="WP_000022509.1">
    <property type="nucleotide sequence ID" value="NC_011147.1"/>
</dbReference>
<dbReference type="SMR" id="B5BH57"/>
<dbReference type="GeneID" id="93033412"/>
<dbReference type="KEGG" id="sek:SSPA0905"/>
<dbReference type="HOGENOM" id="CLU_091257_2_1_6"/>
<dbReference type="Proteomes" id="UP000001869">
    <property type="component" value="Chromosome"/>
</dbReference>
<dbReference type="GO" id="GO:0005737">
    <property type="term" value="C:cytoplasm"/>
    <property type="evidence" value="ECO:0007669"/>
    <property type="project" value="UniProtKB-SubCell"/>
</dbReference>
<dbReference type="GO" id="GO:0048476">
    <property type="term" value="C:Holliday junction resolvase complex"/>
    <property type="evidence" value="ECO:0007669"/>
    <property type="project" value="UniProtKB-UniRule"/>
</dbReference>
<dbReference type="GO" id="GO:0008821">
    <property type="term" value="F:crossover junction DNA endonuclease activity"/>
    <property type="evidence" value="ECO:0007669"/>
    <property type="project" value="UniProtKB-UniRule"/>
</dbReference>
<dbReference type="GO" id="GO:0003677">
    <property type="term" value="F:DNA binding"/>
    <property type="evidence" value="ECO:0007669"/>
    <property type="project" value="UniProtKB-KW"/>
</dbReference>
<dbReference type="GO" id="GO:0000287">
    <property type="term" value="F:magnesium ion binding"/>
    <property type="evidence" value="ECO:0007669"/>
    <property type="project" value="UniProtKB-UniRule"/>
</dbReference>
<dbReference type="GO" id="GO:0006310">
    <property type="term" value="P:DNA recombination"/>
    <property type="evidence" value="ECO:0007669"/>
    <property type="project" value="UniProtKB-UniRule"/>
</dbReference>
<dbReference type="GO" id="GO:0006281">
    <property type="term" value="P:DNA repair"/>
    <property type="evidence" value="ECO:0007669"/>
    <property type="project" value="UniProtKB-UniRule"/>
</dbReference>
<dbReference type="CDD" id="cd16962">
    <property type="entry name" value="RuvC"/>
    <property type="match status" value="1"/>
</dbReference>
<dbReference type="FunFam" id="3.30.420.10:FF:000002">
    <property type="entry name" value="Crossover junction endodeoxyribonuclease RuvC"/>
    <property type="match status" value="1"/>
</dbReference>
<dbReference type="Gene3D" id="3.30.420.10">
    <property type="entry name" value="Ribonuclease H-like superfamily/Ribonuclease H"/>
    <property type="match status" value="1"/>
</dbReference>
<dbReference type="HAMAP" id="MF_00034">
    <property type="entry name" value="RuvC"/>
    <property type="match status" value="1"/>
</dbReference>
<dbReference type="InterPro" id="IPR012337">
    <property type="entry name" value="RNaseH-like_sf"/>
</dbReference>
<dbReference type="InterPro" id="IPR036397">
    <property type="entry name" value="RNaseH_sf"/>
</dbReference>
<dbReference type="InterPro" id="IPR020563">
    <property type="entry name" value="X-over_junc_endoDNase_Mg_BS"/>
</dbReference>
<dbReference type="InterPro" id="IPR002176">
    <property type="entry name" value="X-over_junc_endoDNase_RuvC"/>
</dbReference>
<dbReference type="NCBIfam" id="NF000711">
    <property type="entry name" value="PRK00039.2-1"/>
    <property type="match status" value="1"/>
</dbReference>
<dbReference type="NCBIfam" id="TIGR00228">
    <property type="entry name" value="ruvC"/>
    <property type="match status" value="1"/>
</dbReference>
<dbReference type="PANTHER" id="PTHR30194">
    <property type="entry name" value="CROSSOVER JUNCTION ENDODEOXYRIBONUCLEASE RUVC"/>
    <property type="match status" value="1"/>
</dbReference>
<dbReference type="PANTHER" id="PTHR30194:SF3">
    <property type="entry name" value="CROSSOVER JUNCTION ENDODEOXYRIBONUCLEASE RUVC"/>
    <property type="match status" value="1"/>
</dbReference>
<dbReference type="Pfam" id="PF02075">
    <property type="entry name" value="RuvC"/>
    <property type="match status" value="1"/>
</dbReference>
<dbReference type="PRINTS" id="PR00696">
    <property type="entry name" value="RSOLVASERUVC"/>
</dbReference>
<dbReference type="SUPFAM" id="SSF53098">
    <property type="entry name" value="Ribonuclease H-like"/>
    <property type="match status" value="1"/>
</dbReference>
<dbReference type="PROSITE" id="PS01321">
    <property type="entry name" value="RUVC"/>
    <property type="match status" value="1"/>
</dbReference>
<keyword id="KW-0963">Cytoplasm</keyword>
<keyword id="KW-0227">DNA damage</keyword>
<keyword id="KW-0233">DNA recombination</keyword>
<keyword id="KW-0234">DNA repair</keyword>
<keyword id="KW-0238">DNA-binding</keyword>
<keyword id="KW-0255">Endonuclease</keyword>
<keyword id="KW-0378">Hydrolase</keyword>
<keyword id="KW-0460">Magnesium</keyword>
<keyword id="KW-0479">Metal-binding</keyword>
<keyword id="KW-0540">Nuclease</keyword>
<proteinExistence type="inferred from homology"/>
<reference key="1">
    <citation type="journal article" date="2009" name="BMC Genomics">
        <title>Pseudogene accumulation in the evolutionary histories of Salmonella enterica serovars Paratyphi A and Typhi.</title>
        <authorList>
            <person name="Holt K.E."/>
            <person name="Thomson N.R."/>
            <person name="Wain J."/>
            <person name="Langridge G.C."/>
            <person name="Hasan R."/>
            <person name="Bhutta Z.A."/>
            <person name="Quail M.A."/>
            <person name="Norbertczak H."/>
            <person name="Walker D."/>
            <person name="Simmonds M."/>
            <person name="White B."/>
            <person name="Bason N."/>
            <person name="Mungall K."/>
            <person name="Dougan G."/>
            <person name="Parkhill J."/>
        </authorList>
    </citation>
    <scope>NUCLEOTIDE SEQUENCE [LARGE SCALE GENOMIC DNA]</scope>
    <source>
        <strain>AKU_12601</strain>
    </source>
</reference>
<sequence length="173" mass="18791">MSIILGIDPGSRITGYGVIRQVGRQLTYLGSGCIRTKVDDLPSRLKLIYAGVTEIITQFQPDYFAIEQVFMAKNADSALKLGQARGVAIVAAVNQELPVFEYAARQVKQTVVGIGSAEKSQVQHMVRTLLKLPANPQADAADALAIAITHCHVSQNAMQMSESRLNLARGRLR</sequence>